<accession>C0HJW6</accession>
<keyword id="KW-0027">Amidation</keyword>
<keyword id="KW-0903">Direct protein sequencing</keyword>
<keyword id="KW-1015">Disulfide bond</keyword>
<keyword id="KW-0872">Ion channel impairing toxin</keyword>
<keyword id="KW-0528">Neurotoxin</keyword>
<keyword id="KW-0632">Potassium channel impairing toxin</keyword>
<keyword id="KW-0964">Secreted</keyword>
<keyword id="KW-0800">Toxin</keyword>
<keyword id="KW-1220">Voltage-gated potassium channel impairing toxin</keyword>
<proteinExistence type="evidence at protein level"/>
<organism>
    <name type="scientific">Centruroides tecomanus</name>
    <name type="common">Scorpion</name>
    <name type="synonym">Centruroides limpidus tecomanus</name>
    <dbReference type="NCBI Taxonomy" id="1028682"/>
    <lineage>
        <taxon>Eukaryota</taxon>
        <taxon>Metazoa</taxon>
        <taxon>Ecdysozoa</taxon>
        <taxon>Arthropoda</taxon>
        <taxon>Chelicerata</taxon>
        <taxon>Arachnida</taxon>
        <taxon>Scorpiones</taxon>
        <taxon>Buthida</taxon>
        <taxon>Buthoidea</taxon>
        <taxon>Buthidae</taxon>
        <taxon>Centruroides</taxon>
    </lineage>
</organism>
<sequence length="39" mass="4345">TIINVKCTSPKQCLKPCKDLYGPHAGEKCMNGKCKCYKI</sequence>
<name>KAX2G_CENTE</name>
<feature type="peptide" id="PRO_0000436537" description="Potassium channel toxin alpha-KTx 2.16" evidence="4">
    <location>
        <begin position="1"/>
        <end position="39"/>
    </location>
</feature>
<feature type="site" description="Basic residue of the functional dyad" evidence="1">
    <location>
        <position position="28"/>
    </location>
</feature>
<feature type="site" description="Aromatic residue of the functional dyad" evidence="1">
    <location>
        <position position="37"/>
    </location>
</feature>
<feature type="modified residue" description="Isoleucine amide" evidence="3">
    <location>
        <position position="39"/>
    </location>
</feature>
<feature type="disulfide bond" evidence="1">
    <location>
        <begin position="7"/>
        <end position="29"/>
    </location>
</feature>
<feature type="disulfide bond" evidence="1">
    <location>
        <begin position="13"/>
        <end position="34"/>
    </location>
</feature>
<feature type="disulfide bond" evidence="1">
    <location>
        <begin position="17"/>
        <end position="36"/>
    </location>
</feature>
<comment type="function">
    <text evidence="4">Blocks human voltage-gated potassium channels Kv1.2/KCNA2 (IC(50)=0.7 nM), Kv1.3/KCNA3 (IC(50)=26.2 nM) and blocks intermediate conductance calcium-activated potassium channel KCa3.1/KCNN4 (IC(50)=56 nM).</text>
</comment>
<comment type="subcellular location">
    <subcellularLocation>
        <location evidence="4">Secreted</location>
    </subcellularLocation>
</comment>
<comment type="tissue specificity">
    <text evidence="7">Expressed by the venom gland.</text>
</comment>
<comment type="domain">
    <text evidence="2">Has the structural arrangement of an alpha-helix connected to a beta-sheet by disulfide bonds (CSalpha/beta).</text>
</comment>
<comment type="mass spectrometry" mass="4339.9" method="Unknown" evidence="4"/>
<comment type="miscellaneous">
    <text evidence="4">Negative results: does not block voltage-gated potassium channel Kv1.1/KCNA1 or the Shaker IR (with inactivation domain removed).</text>
</comment>
<comment type="similarity">
    <text evidence="6">Belongs to the short scorpion toxin superfamily. Potassium channel inhibitor family. Alpha-KTx 02 subfamily.</text>
</comment>
<protein>
    <recommendedName>
        <fullName evidence="5">Potassium channel toxin alpha-KTx 2.16</fullName>
    </recommendedName>
    <alternativeName>
        <fullName evidence="5">Toxin II.12.5</fullName>
    </alternativeName>
</protein>
<reference key="1">
    <citation type="journal article" date="2016" name="Toxicon">
        <title>Isolation, chemical and functional characterization of several new K(+)-channel blocking peptides from the venom of the scorpion Centruroides tecomanus.</title>
        <authorList>
            <person name="Olamendi-Portugal T."/>
            <person name="Bartok A."/>
            <person name="Zamudio-Zuniga F."/>
            <person name="Balajthy A."/>
            <person name="Becerril B."/>
            <person name="Panyi G."/>
            <person name="Possani L.D."/>
        </authorList>
    </citation>
    <scope>PROTEIN SEQUENCE</scope>
    <scope>FUNCTION</scope>
    <scope>SUBCELLULAR LOCATION</scope>
    <scope>MASS SPECTROMETRY</scope>
    <source>
        <tissue>Venom</tissue>
    </source>
</reference>
<evidence type="ECO:0000250" key="1">
    <source>
        <dbReference type="UniProtKB" id="O46028"/>
    </source>
</evidence>
<evidence type="ECO:0000250" key="2">
    <source>
        <dbReference type="UniProtKB" id="P08815"/>
    </source>
</evidence>
<evidence type="ECO:0000250" key="3">
    <source>
        <dbReference type="UniProtKB" id="P0C164"/>
    </source>
</evidence>
<evidence type="ECO:0000269" key="4">
    <source>
    </source>
</evidence>
<evidence type="ECO:0000303" key="5">
    <source>
    </source>
</evidence>
<evidence type="ECO:0000305" key="6"/>
<evidence type="ECO:0000305" key="7">
    <source>
    </source>
</evidence>
<dbReference type="SMR" id="C0HJW6"/>
<dbReference type="GO" id="GO:0005576">
    <property type="term" value="C:extracellular region"/>
    <property type="evidence" value="ECO:0007669"/>
    <property type="project" value="UniProtKB-SubCell"/>
</dbReference>
<dbReference type="GO" id="GO:0008200">
    <property type="term" value="F:ion channel inhibitor activity"/>
    <property type="evidence" value="ECO:0007669"/>
    <property type="project" value="InterPro"/>
</dbReference>
<dbReference type="GO" id="GO:0015459">
    <property type="term" value="F:potassium channel regulator activity"/>
    <property type="evidence" value="ECO:0007669"/>
    <property type="project" value="UniProtKB-KW"/>
</dbReference>
<dbReference type="GO" id="GO:0090729">
    <property type="term" value="F:toxin activity"/>
    <property type="evidence" value="ECO:0007669"/>
    <property type="project" value="UniProtKB-KW"/>
</dbReference>
<dbReference type="Gene3D" id="3.30.30.10">
    <property type="entry name" value="Knottin, scorpion toxin-like"/>
    <property type="match status" value="1"/>
</dbReference>
<dbReference type="InterPro" id="IPR036574">
    <property type="entry name" value="Scorpion_toxin-like_sf"/>
</dbReference>
<dbReference type="InterPro" id="IPR001947">
    <property type="entry name" value="Scorpion_toxinS_K_inh"/>
</dbReference>
<dbReference type="Pfam" id="PF00451">
    <property type="entry name" value="Toxin_2"/>
    <property type="match status" value="1"/>
</dbReference>
<dbReference type="PRINTS" id="PR00286">
    <property type="entry name" value="CHARYBDTOXIN"/>
</dbReference>
<dbReference type="SUPFAM" id="SSF57095">
    <property type="entry name" value="Scorpion toxin-like"/>
    <property type="match status" value="1"/>
</dbReference>